<evidence type="ECO:0000250" key="1">
    <source>
        <dbReference type="UniProtKB" id="B1P1J0"/>
    </source>
</evidence>
<evidence type="ECO:0000255" key="2"/>
<evidence type="ECO:0000303" key="3">
    <source>
    </source>
</evidence>
<evidence type="ECO:0000305" key="4"/>
<evidence type="ECO:0000305" key="5">
    <source>
    </source>
</evidence>
<evidence type="ECO:0000312" key="6">
    <source>
        <dbReference type="EMBL" id="CDZ18845.1"/>
    </source>
</evidence>
<feature type="signal peptide" evidence="2">
    <location>
        <begin position="1"/>
        <end position="21"/>
    </location>
</feature>
<feature type="chain" id="PRO_5008896971" description="U17-hexatoxin-Hi1a">
    <location>
        <begin position="22"/>
        <end position="82"/>
    </location>
</feature>
<feature type="disulfide bond" evidence="1">
    <location>
        <begin position="22"/>
        <end position="33"/>
    </location>
</feature>
<feature type="disulfide bond" evidence="1">
    <location>
        <begin position="27"/>
        <end position="48"/>
    </location>
</feature>
<feature type="disulfide bond" evidence="1">
    <location>
        <begin position="32"/>
        <end position="61"/>
    </location>
</feature>
<feature type="disulfide bond" evidence="1">
    <location>
        <begin position="58"/>
        <end position="69"/>
    </location>
</feature>
<feature type="disulfide bond" evidence="1">
    <location>
        <begin position="63"/>
        <end position="75"/>
    </location>
</feature>
<proteinExistence type="inferred from homology"/>
<comment type="function">
    <text evidence="4">Probable ion channel inhibitor.</text>
</comment>
<comment type="subcellular location">
    <subcellularLocation>
        <location evidence="5">Secreted</location>
    </subcellularLocation>
</comment>
<comment type="tissue specificity">
    <text evidence="5">Expressed by the venom gland.</text>
</comment>
<reference key="1">
    <citation type="journal article" date="2020" name="Proc. Natl. Acad. Sci. U.S.A.">
        <title>Structural venomics reveals evolution of a complex venom by duplication and diversification of an ancient peptide-encoding gene.</title>
        <authorList>
            <person name="Pineda S.S."/>
            <person name="Chin Y.K."/>
            <person name="Undheim E.A.B."/>
            <person name="Senff S."/>
            <person name="Mobli M."/>
            <person name="Dauly C."/>
            <person name="Escoubas P."/>
            <person name="Nicholson G.M."/>
            <person name="Kaas Q."/>
            <person name="Guo S."/>
            <person name="Herzig V."/>
            <person name="Mattick J.S."/>
            <person name="King G.F."/>
        </authorList>
    </citation>
    <scope>NUCLEOTIDE SEQUENCE [MRNA]</scope>
    <source>
        <tissue>Venom gland</tissue>
    </source>
</reference>
<reference evidence="6" key="2">
    <citation type="thesis" date="2012" institute="The University of Queensland" country="Australia">
        <title>Probing the chemical diversity of venom from the Australian Funnel-web spider Hadronyche infensa.</title>
        <authorList>
            <person name="Pineda S.S."/>
        </authorList>
    </citation>
    <scope>NUCLEOTIDE SEQUENCE [MRNA]</scope>
    <source>
        <tissue>Venom gland</tissue>
    </source>
</reference>
<reference evidence="6" key="3">
    <citation type="submission" date="2014-07" db="EMBL/GenBank/DDBJ databases">
        <authorList>
            <person name="Zhang J.E."/>
            <person name="Yang H."/>
            <person name="Guo J."/>
            <person name="Deng Z."/>
            <person name="Luo H."/>
            <person name="Luo M."/>
            <person name="Zhao B."/>
        </authorList>
    </citation>
    <scope>NUCLEOTIDE SEQUENCE [MRNA]</scope>
    <source>
        <tissue>Venom gland</tissue>
    </source>
</reference>
<dbReference type="EMBL" id="HACE01000061">
    <property type="protein sequence ID" value="CDZ18845.1"/>
    <property type="molecule type" value="mRNA"/>
</dbReference>
<dbReference type="GO" id="GO:0005576">
    <property type="term" value="C:extracellular region"/>
    <property type="evidence" value="ECO:0007669"/>
    <property type="project" value="UniProtKB-SubCell"/>
</dbReference>
<dbReference type="GO" id="GO:0099106">
    <property type="term" value="F:ion channel regulator activity"/>
    <property type="evidence" value="ECO:0007669"/>
    <property type="project" value="UniProtKB-KW"/>
</dbReference>
<dbReference type="GO" id="GO:0090729">
    <property type="term" value="F:toxin activity"/>
    <property type="evidence" value="ECO:0007669"/>
    <property type="project" value="UniProtKB-KW"/>
</dbReference>
<protein>
    <recommendedName>
        <fullName evidence="3">U17-hexatoxin-Hi1a</fullName>
        <shortName evidence="3">U17-HXTX-Hi1a</shortName>
    </recommendedName>
    <alternativeName>
        <fullName evidence="3">SF22 peptide</fullName>
    </alternativeName>
</protein>
<organism>
    <name type="scientific">Hadronyche infensa</name>
    <name type="common">Fraser island funnel-web spider</name>
    <name type="synonym">Atrax infensus</name>
    <dbReference type="NCBI Taxonomy" id="153481"/>
    <lineage>
        <taxon>Eukaryota</taxon>
        <taxon>Metazoa</taxon>
        <taxon>Ecdysozoa</taxon>
        <taxon>Arthropoda</taxon>
        <taxon>Chelicerata</taxon>
        <taxon>Arachnida</taxon>
        <taxon>Araneae</taxon>
        <taxon>Mygalomorphae</taxon>
        <taxon>Hexathelidae</taxon>
        <taxon>Hadronyche</taxon>
    </lineage>
</organism>
<name>TH1A_HADIN</name>
<accession>A0A1D0BPN8</accession>
<sequence length="82" mass="8696">MKTIFAVTLLLFAIYVPECMPCHQSGCSPGFCCWLTYPPTTATDPYSCVSNSTLGVSCGPCGCLQGYNCTSNGGCQLLRRVG</sequence>
<keyword id="KW-1015">Disulfide bond</keyword>
<keyword id="KW-0872">Ion channel impairing toxin</keyword>
<keyword id="KW-0964">Secreted</keyword>
<keyword id="KW-0732">Signal</keyword>
<keyword id="KW-0800">Toxin</keyword>